<evidence type="ECO:0000250" key="1"/>
<evidence type="ECO:0000255" key="2"/>
<evidence type="ECO:0000256" key="3">
    <source>
        <dbReference type="SAM" id="MobiDB-lite"/>
    </source>
</evidence>
<evidence type="ECO:0000303" key="4">
    <source>
    </source>
</evidence>
<evidence type="ECO:0000305" key="5"/>
<evidence type="ECO:0007744" key="6">
    <source>
    </source>
</evidence>
<sequence length="316" mass="35608">MPKKKTGARKKAENRREREKQLRASRSTVDLAKHPCNASMECDKCQRRQKNRAFCYFCNSVQKLPICAQCGKTKCMMKSSDCVIKHAGVYSTGLAMVGAICDFCEAWVCHGRKCLSTHACACPLTDAECVECERGVWDHGGRIFSCSFCHNFLCEDDQFEHQASCQVLEAETFKCVSCNRLGQHSCLRCKACFCDEHTRSKVFKQEKGKQPPCPKCGHETQETKDLSMSTRSLKFGRQTGGEEDGASGYDAYWKNLSSDKYGDTGYHDDDEEEDEAEDEEEEDGKDSDAESSDLFNNLNLGRTYASGYAHYEEQES</sequence>
<gene>
    <name type="primary">Znf330</name>
    <name type="synonym">Noa36</name>
    <name type="synonym">Zfp330</name>
</gene>
<accession>Q922H9</accession>
<accession>Q8C389</accession>
<accession>Q8K2M4</accession>
<proteinExistence type="evidence at protein level"/>
<keyword id="KW-0025">Alternative splicing</keyword>
<keyword id="KW-0137">Centromere</keyword>
<keyword id="KW-0158">Chromosome</keyword>
<keyword id="KW-0479">Metal-binding</keyword>
<keyword id="KW-0539">Nucleus</keyword>
<keyword id="KW-0597">Phosphoprotein</keyword>
<keyword id="KW-1185">Reference proteome</keyword>
<keyword id="KW-0677">Repeat</keyword>
<keyword id="KW-0862">Zinc</keyword>
<keyword id="KW-0863">Zinc-finger</keyword>
<dbReference type="EMBL" id="AK050534">
    <property type="protein sequence ID" value="BAC34313.1"/>
    <property type="molecule type" value="mRNA"/>
</dbReference>
<dbReference type="EMBL" id="AK086617">
    <property type="protein sequence ID" value="BAC39702.1"/>
    <property type="molecule type" value="mRNA"/>
</dbReference>
<dbReference type="EMBL" id="BC008086">
    <property type="protein sequence ID" value="AAH08086.1"/>
    <property type="molecule type" value="mRNA"/>
</dbReference>
<dbReference type="EMBL" id="BC030675">
    <property type="protein sequence ID" value="AAH30675.1"/>
    <property type="molecule type" value="mRNA"/>
</dbReference>
<dbReference type="EMBL" id="BC083081">
    <property type="protein sequence ID" value="AAH83081.1"/>
    <property type="molecule type" value="mRNA"/>
</dbReference>
<dbReference type="CCDS" id="CCDS22447.1">
    <molecule id="Q922H9-1"/>
</dbReference>
<dbReference type="RefSeq" id="NP_663575.1">
    <molecule id="Q922H9-1"/>
    <property type="nucleotide sequence ID" value="NM_145600.1"/>
</dbReference>
<dbReference type="BioGRID" id="206009">
    <property type="interactions" value="9"/>
</dbReference>
<dbReference type="FunCoup" id="Q922H9">
    <property type="interactions" value="2873"/>
</dbReference>
<dbReference type="STRING" id="10090.ENSMUSP00000034147"/>
<dbReference type="iPTMnet" id="Q922H9"/>
<dbReference type="PhosphoSitePlus" id="Q922H9"/>
<dbReference type="SwissPalm" id="Q922H9"/>
<dbReference type="jPOST" id="Q922H9"/>
<dbReference type="PaxDb" id="10090-ENSMUSP00000034147"/>
<dbReference type="PeptideAtlas" id="Q922H9"/>
<dbReference type="ProteomicsDB" id="275007">
    <molecule id="Q922H9-1"/>
</dbReference>
<dbReference type="ProteomicsDB" id="275008">
    <molecule id="Q922H9-2"/>
</dbReference>
<dbReference type="Pumba" id="Q922H9"/>
<dbReference type="Antibodypedia" id="2840">
    <property type="antibodies" value="38 antibodies from 14 providers"/>
</dbReference>
<dbReference type="DNASU" id="30932"/>
<dbReference type="Ensembl" id="ENSMUST00000034147.4">
    <molecule id="Q922H9-1"/>
    <property type="protein sequence ID" value="ENSMUSP00000034147.4"/>
    <property type="gene ID" value="ENSMUSG00000031711.8"/>
</dbReference>
<dbReference type="GeneID" id="30932"/>
<dbReference type="KEGG" id="mmu:30932"/>
<dbReference type="UCSC" id="uc009mjo.1">
    <molecule id="Q922H9-1"/>
    <property type="organism name" value="mouse"/>
</dbReference>
<dbReference type="AGR" id="MGI:1353574"/>
<dbReference type="CTD" id="30932"/>
<dbReference type="MGI" id="MGI:1353574">
    <property type="gene designation" value="Zfp330"/>
</dbReference>
<dbReference type="VEuPathDB" id="HostDB:ENSMUSG00000031711"/>
<dbReference type="eggNOG" id="ENOG502QRJT">
    <property type="taxonomic scope" value="Eukaryota"/>
</dbReference>
<dbReference type="GeneTree" id="ENSGT00390000017043"/>
<dbReference type="HOGENOM" id="CLU_074902_0_0_1"/>
<dbReference type="InParanoid" id="Q922H9"/>
<dbReference type="OMA" id="CQRTRRQ"/>
<dbReference type="OrthoDB" id="10258894at2759"/>
<dbReference type="PhylomeDB" id="Q922H9"/>
<dbReference type="TreeFam" id="TF323303"/>
<dbReference type="BioGRID-ORCS" id="30932">
    <property type="hits" value="7 hits in 76 CRISPR screens"/>
</dbReference>
<dbReference type="ChiTaRS" id="Zfp330">
    <property type="organism name" value="mouse"/>
</dbReference>
<dbReference type="PRO" id="PR:Q922H9"/>
<dbReference type="Proteomes" id="UP000000589">
    <property type="component" value="Chromosome 8"/>
</dbReference>
<dbReference type="RNAct" id="Q922H9">
    <property type="molecule type" value="protein"/>
</dbReference>
<dbReference type="Bgee" id="ENSMUSG00000031711">
    <property type="expression patterns" value="Expressed in epiblast (generic) and 66 other cell types or tissues"/>
</dbReference>
<dbReference type="ExpressionAtlas" id="Q922H9">
    <property type="expression patterns" value="baseline and differential"/>
</dbReference>
<dbReference type="GO" id="GO:0000775">
    <property type="term" value="C:chromosome, centromeric region"/>
    <property type="evidence" value="ECO:0000250"/>
    <property type="project" value="UniProtKB"/>
</dbReference>
<dbReference type="GO" id="GO:0036064">
    <property type="term" value="C:ciliary basal body"/>
    <property type="evidence" value="ECO:0007669"/>
    <property type="project" value="Ensembl"/>
</dbReference>
<dbReference type="GO" id="GO:0005829">
    <property type="term" value="C:cytosol"/>
    <property type="evidence" value="ECO:0007669"/>
    <property type="project" value="Ensembl"/>
</dbReference>
<dbReference type="GO" id="GO:0030496">
    <property type="term" value="C:midbody"/>
    <property type="evidence" value="ECO:0000250"/>
    <property type="project" value="UniProtKB"/>
</dbReference>
<dbReference type="GO" id="GO:0005730">
    <property type="term" value="C:nucleolus"/>
    <property type="evidence" value="ECO:0000250"/>
    <property type="project" value="UniProtKB"/>
</dbReference>
<dbReference type="GO" id="GO:0005654">
    <property type="term" value="C:nucleoplasm"/>
    <property type="evidence" value="ECO:0007669"/>
    <property type="project" value="Ensembl"/>
</dbReference>
<dbReference type="GO" id="GO:0008270">
    <property type="term" value="F:zinc ion binding"/>
    <property type="evidence" value="ECO:0007669"/>
    <property type="project" value="UniProtKB-KW"/>
</dbReference>
<dbReference type="InterPro" id="IPR010531">
    <property type="entry name" value="NOA36"/>
</dbReference>
<dbReference type="PANTHER" id="PTHR13214">
    <property type="entry name" value="ZINC FINGER PROTEIN 330"/>
    <property type="match status" value="1"/>
</dbReference>
<dbReference type="PANTHER" id="PTHR13214:SF1">
    <property type="entry name" value="ZINC FINGER PROTEIN 330"/>
    <property type="match status" value="1"/>
</dbReference>
<dbReference type="Pfam" id="PF06524">
    <property type="entry name" value="NOA36"/>
    <property type="match status" value="1"/>
</dbReference>
<reference key="1">
    <citation type="journal article" date="2005" name="Science">
        <title>The transcriptional landscape of the mammalian genome.</title>
        <authorList>
            <person name="Carninci P."/>
            <person name="Kasukawa T."/>
            <person name="Katayama S."/>
            <person name="Gough J."/>
            <person name="Frith M.C."/>
            <person name="Maeda N."/>
            <person name="Oyama R."/>
            <person name="Ravasi T."/>
            <person name="Lenhard B."/>
            <person name="Wells C."/>
            <person name="Kodzius R."/>
            <person name="Shimokawa K."/>
            <person name="Bajic V.B."/>
            <person name="Brenner S.E."/>
            <person name="Batalov S."/>
            <person name="Forrest A.R."/>
            <person name="Zavolan M."/>
            <person name="Davis M.J."/>
            <person name="Wilming L.G."/>
            <person name="Aidinis V."/>
            <person name="Allen J.E."/>
            <person name="Ambesi-Impiombato A."/>
            <person name="Apweiler R."/>
            <person name="Aturaliya R.N."/>
            <person name="Bailey T.L."/>
            <person name="Bansal M."/>
            <person name="Baxter L."/>
            <person name="Beisel K.W."/>
            <person name="Bersano T."/>
            <person name="Bono H."/>
            <person name="Chalk A.M."/>
            <person name="Chiu K.P."/>
            <person name="Choudhary V."/>
            <person name="Christoffels A."/>
            <person name="Clutterbuck D.R."/>
            <person name="Crowe M.L."/>
            <person name="Dalla E."/>
            <person name="Dalrymple B.P."/>
            <person name="de Bono B."/>
            <person name="Della Gatta G."/>
            <person name="di Bernardo D."/>
            <person name="Down T."/>
            <person name="Engstrom P."/>
            <person name="Fagiolini M."/>
            <person name="Faulkner G."/>
            <person name="Fletcher C.F."/>
            <person name="Fukushima T."/>
            <person name="Furuno M."/>
            <person name="Futaki S."/>
            <person name="Gariboldi M."/>
            <person name="Georgii-Hemming P."/>
            <person name="Gingeras T.R."/>
            <person name="Gojobori T."/>
            <person name="Green R.E."/>
            <person name="Gustincich S."/>
            <person name="Harbers M."/>
            <person name="Hayashi Y."/>
            <person name="Hensch T.K."/>
            <person name="Hirokawa N."/>
            <person name="Hill D."/>
            <person name="Huminiecki L."/>
            <person name="Iacono M."/>
            <person name="Ikeo K."/>
            <person name="Iwama A."/>
            <person name="Ishikawa T."/>
            <person name="Jakt M."/>
            <person name="Kanapin A."/>
            <person name="Katoh M."/>
            <person name="Kawasawa Y."/>
            <person name="Kelso J."/>
            <person name="Kitamura H."/>
            <person name="Kitano H."/>
            <person name="Kollias G."/>
            <person name="Krishnan S.P."/>
            <person name="Kruger A."/>
            <person name="Kummerfeld S.K."/>
            <person name="Kurochkin I.V."/>
            <person name="Lareau L.F."/>
            <person name="Lazarevic D."/>
            <person name="Lipovich L."/>
            <person name="Liu J."/>
            <person name="Liuni S."/>
            <person name="McWilliam S."/>
            <person name="Madan Babu M."/>
            <person name="Madera M."/>
            <person name="Marchionni L."/>
            <person name="Matsuda H."/>
            <person name="Matsuzawa S."/>
            <person name="Miki H."/>
            <person name="Mignone F."/>
            <person name="Miyake S."/>
            <person name="Morris K."/>
            <person name="Mottagui-Tabar S."/>
            <person name="Mulder N."/>
            <person name="Nakano N."/>
            <person name="Nakauchi H."/>
            <person name="Ng P."/>
            <person name="Nilsson R."/>
            <person name="Nishiguchi S."/>
            <person name="Nishikawa S."/>
            <person name="Nori F."/>
            <person name="Ohara O."/>
            <person name="Okazaki Y."/>
            <person name="Orlando V."/>
            <person name="Pang K.C."/>
            <person name="Pavan W.J."/>
            <person name="Pavesi G."/>
            <person name="Pesole G."/>
            <person name="Petrovsky N."/>
            <person name="Piazza S."/>
            <person name="Reed J."/>
            <person name="Reid J.F."/>
            <person name="Ring B.Z."/>
            <person name="Ringwald M."/>
            <person name="Rost B."/>
            <person name="Ruan Y."/>
            <person name="Salzberg S.L."/>
            <person name="Sandelin A."/>
            <person name="Schneider C."/>
            <person name="Schoenbach C."/>
            <person name="Sekiguchi K."/>
            <person name="Semple C.A."/>
            <person name="Seno S."/>
            <person name="Sessa L."/>
            <person name="Sheng Y."/>
            <person name="Shibata Y."/>
            <person name="Shimada H."/>
            <person name="Shimada K."/>
            <person name="Silva D."/>
            <person name="Sinclair B."/>
            <person name="Sperling S."/>
            <person name="Stupka E."/>
            <person name="Sugiura K."/>
            <person name="Sultana R."/>
            <person name="Takenaka Y."/>
            <person name="Taki K."/>
            <person name="Tammoja K."/>
            <person name="Tan S.L."/>
            <person name="Tang S."/>
            <person name="Taylor M.S."/>
            <person name="Tegner J."/>
            <person name="Teichmann S.A."/>
            <person name="Ueda H.R."/>
            <person name="van Nimwegen E."/>
            <person name="Verardo R."/>
            <person name="Wei C.L."/>
            <person name="Yagi K."/>
            <person name="Yamanishi H."/>
            <person name="Zabarovsky E."/>
            <person name="Zhu S."/>
            <person name="Zimmer A."/>
            <person name="Hide W."/>
            <person name="Bult C."/>
            <person name="Grimmond S.M."/>
            <person name="Teasdale R.D."/>
            <person name="Liu E.T."/>
            <person name="Brusic V."/>
            <person name="Quackenbush J."/>
            <person name="Wahlestedt C."/>
            <person name="Mattick J.S."/>
            <person name="Hume D.A."/>
            <person name="Kai C."/>
            <person name="Sasaki D."/>
            <person name="Tomaru Y."/>
            <person name="Fukuda S."/>
            <person name="Kanamori-Katayama M."/>
            <person name="Suzuki M."/>
            <person name="Aoki J."/>
            <person name="Arakawa T."/>
            <person name="Iida J."/>
            <person name="Imamura K."/>
            <person name="Itoh M."/>
            <person name="Kato T."/>
            <person name="Kawaji H."/>
            <person name="Kawagashira N."/>
            <person name="Kawashima T."/>
            <person name="Kojima M."/>
            <person name="Kondo S."/>
            <person name="Konno H."/>
            <person name="Nakano K."/>
            <person name="Ninomiya N."/>
            <person name="Nishio T."/>
            <person name="Okada M."/>
            <person name="Plessy C."/>
            <person name="Shibata K."/>
            <person name="Shiraki T."/>
            <person name="Suzuki S."/>
            <person name="Tagami M."/>
            <person name="Waki K."/>
            <person name="Watahiki A."/>
            <person name="Okamura-Oho Y."/>
            <person name="Suzuki H."/>
            <person name="Kawai J."/>
            <person name="Hayashizaki Y."/>
        </authorList>
    </citation>
    <scope>NUCLEOTIDE SEQUENCE [LARGE SCALE MRNA] (ISOFORM 1)</scope>
    <source>
        <strain>C57BL/6J</strain>
        <tissue>Head</tissue>
        <tissue>Pancreas</tissue>
    </source>
</reference>
<reference key="2">
    <citation type="journal article" date="2004" name="Genome Res.">
        <title>The status, quality, and expansion of the NIH full-length cDNA project: the Mammalian Gene Collection (MGC).</title>
        <authorList>
            <consortium name="The MGC Project Team"/>
        </authorList>
    </citation>
    <scope>NUCLEOTIDE SEQUENCE [LARGE SCALE MRNA] (ISOFORMS 1 AND 2)</scope>
    <source>
        <strain>FVB/N</strain>
        <tissue>Limb</tissue>
        <tissue>Mammary gland</tissue>
    </source>
</reference>
<reference key="3">
    <citation type="journal article" date="2010" name="Cell">
        <title>A tissue-specific atlas of mouse protein phosphorylation and expression.</title>
        <authorList>
            <person name="Huttlin E.L."/>
            <person name="Jedrychowski M.P."/>
            <person name="Elias J.E."/>
            <person name="Goswami T."/>
            <person name="Rad R."/>
            <person name="Beausoleil S.A."/>
            <person name="Villen J."/>
            <person name="Haas W."/>
            <person name="Sowa M.E."/>
            <person name="Gygi S.P."/>
        </authorList>
    </citation>
    <scope>PHOSPHORYLATION [LARGE SCALE ANALYSIS] AT SER-287</scope>
    <scope>IDENTIFICATION BY MASS SPECTROMETRY [LARGE SCALE ANALYSIS]</scope>
    <source>
        <tissue>Kidney</tissue>
        <tissue>Liver</tissue>
        <tissue>Pancreas</tissue>
        <tissue>Spleen</tissue>
    </source>
</reference>
<comment type="subcellular location">
    <subcellularLocation>
        <location evidence="1">Nucleus</location>
    </subcellularLocation>
    <subcellularLocation>
        <location evidence="1">Nucleus</location>
        <location evidence="1">Nucleolus</location>
    </subcellularLocation>
    <subcellularLocation>
        <location evidence="1">Chromosome</location>
        <location evidence="1">Centromere</location>
    </subcellularLocation>
    <text evidence="1">Predominantly expressed in nucleolus. In mitosis associated with centromeres and concentrated at the midbody in cytokinesis (By similarity).</text>
</comment>
<comment type="alternative products">
    <event type="alternative splicing"/>
    <isoform>
        <id>Q922H9-1</id>
        <name>1</name>
        <sequence type="displayed"/>
    </isoform>
    <isoform>
        <id>Q922H9-2</id>
        <name>2</name>
        <sequence type="described" ref="VSP_011428"/>
    </isoform>
</comment>
<comment type="similarity">
    <text evidence="5">Belongs to the NOA36 family.</text>
</comment>
<name>ZN330_MOUSE</name>
<organism>
    <name type="scientific">Mus musculus</name>
    <name type="common">Mouse</name>
    <dbReference type="NCBI Taxonomy" id="10090"/>
    <lineage>
        <taxon>Eukaryota</taxon>
        <taxon>Metazoa</taxon>
        <taxon>Chordata</taxon>
        <taxon>Craniata</taxon>
        <taxon>Vertebrata</taxon>
        <taxon>Euteleostomi</taxon>
        <taxon>Mammalia</taxon>
        <taxon>Eutheria</taxon>
        <taxon>Euarchontoglires</taxon>
        <taxon>Glires</taxon>
        <taxon>Rodentia</taxon>
        <taxon>Myomorpha</taxon>
        <taxon>Muroidea</taxon>
        <taxon>Muridae</taxon>
        <taxon>Murinae</taxon>
        <taxon>Mus</taxon>
        <taxon>Mus</taxon>
    </lineage>
</organism>
<feature type="chain" id="PRO_0000066591" description="Zinc finger protein 330">
    <location>
        <begin position="1"/>
        <end position="316"/>
    </location>
</feature>
<feature type="zinc finger region" description="C4-type 1" evidence="2">
    <location>
        <begin position="42"/>
        <end position="58"/>
    </location>
</feature>
<feature type="zinc finger region" description="C4-type 2" evidence="2">
    <location>
        <begin position="67"/>
        <end position="104"/>
    </location>
</feature>
<feature type="zinc finger region" description="C4-type 3" evidence="2">
    <location>
        <begin position="129"/>
        <end position="149"/>
    </location>
</feature>
<feature type="zinc finger region" description="C4-type 4" evidence="2">
    <location>
        <begin position="175"/>
        <end position="189"/>
    </location>
</feature>
<feature type="region of interest" description="Disordered" evidence="3">
    <location>
        <begin position="1"/>
        <end position="24"/>
    </location>
</feature>
<feature type="region of interest" description="Disordered" evidence="3">
    <location>
        <begin position="227"/>
        <end position="299"/>
    </location>
</feature>
<feature type="short sequence motif" description="Nuclear localization signal" evidence="2">
    <location>
        <begin position="3"/>
        <end position="11"/>
    </location>
</feature>
<feature type="compositionally biased region" description="Basic and acidic residues" evidence="3">
    <location>
        <begin position="10"/>
        <end position="22"/>
    </location>
</feature>
<feature type="compositionally biased region" description="Acidic residues" evidence="3">
    <location>
        <begin position="268"/>
        <end position="291"/>
    </location>
</feature>
<feature type="modified residue" description="Phosphoserine" evidence="6">
    <location>
        <position position="287"/>
    </location>
</feature>
<feature type="splice variant" id="VSP_011428" description="In isoform 2." evidence="4">
    <original>RTYASGYAHYEEQES</original>
    <variation>KSSPVSRDAM</variation>
    <location>
        <begin position="302"/>
        <end position="316"/>
    </location>
</feature>
<protein>
    <recommendedName>
        <fullName>Zinc finger protein 330</fullName>
    </recommendedName>
    <alternativeName>
        <fullName>Nucleolar autoantigen 36</fullName>
    </alternativeName>
    <alternativeName>
        <fullName>Nucleolar cysteine-rich protein</fullName>
    </alternativeName>
</protein>